<comment type="function">
    <text evidence="1">NDH-1 shuttles electrons from NADH, via FMN and iron-sulfur (Fe-S) centers, to quinones in the respiratory chain. The immediate electron acceptor for the enzyme in this species is believed to be ubiquinone. Couples the redox reaction to proton translocation (for every two electrons transferred, four hydrogen ions are translocated across the cytoplasmic membrane), and thus conserves the redox energy in a proton gradient. This subunit may bind ubiquinone.</text>
</comment>
<comment type="catalytic activity">
    <reaction evidence="1">
        <text>a quinone + NADH + 5 H(+)(in) = a quinol + NAD(+) + 4 H(+)(out)</text>
        <dbReference type="Rhea" id="RHEA:57888"/>
        <dbReference type="ChEBI" id="CHEBI:15378"/>
        <dbReference type="ChEBI" id="CHEBI:24646"/>
        <dbReference type="ChEBI" id="CHEBI:57540"/>
        <dbReference type="ChEBI" id="CHEBI:57945"/>
        <dbReference type="ChEBI" id="CHEBI:132124"/>
    </reaction>
</comment>
<comment type="subunit">
    <text evidence="1">NDH-1 is composed of 14 different subunits. Subunits NuoA, H, J, K, L, M, N constitute the membrane sector of the complex.</text>
</comment>
<comment type="subcellular location">
    <subcellularLocation>
        <location evidence="1">Cell inner membrane</location>
        <topology evidence="1">Multi-pass membrane protein</topology>
    </subcellularLocation>
</comment>
<comment type="similarity">
    <text evidence="1">Belongs to the complex I subunit 1 family.</text>
</comment>
<name>NUOH_HELP2</name>
<accession>B6JNA7</accession>
<evidence type="ECO:0000255" key="1">
    <source>
        <dbReference type="HAMAP-Rule" id="MF_01350"/>
    </source>
</evidence>
<keyword id="KW-0997">Cell inner membrane</keyword>
<keyword id="KW-1003">Cell membrane</keyword>
<keyword id="KW-0472">Membrane</keyword>
<keyword id="KW-0520">NAD</keyword>
<keyword id="KW-0874">Quinone</keyword>
<keyword id="KW-1278">Translocase</keyword>
<keyword id="KW-0812">Transmembrane</keyword>
<keyword id="KW-1133">Transmembrane helix</keyword>
<keyword id="KW-0830">Ubiquinone</keyword>
<dbReference type="EC" id="7.1.1.-" evidence="1"/>
<dbReference type="EMBL" id="CP001217">
    <property type="protein sequence ID" value="ACJ08385.1"/>
    <property type="molecule type" value="Genomic_DNA"/>
</dbReference>
<dbReference type="SMR" id="B6JNA7"/>
<dbReference type="KEGG" id="hpp:HPP12_1233"/>
<dbReference type="HOGENOM" id="CLU_015134_0_1_7"/>
<dbReference type="Proteomes" id="UP000008198">
    <property type="component" value="Chromosome"/>
</dbReference>
<dbReference type="GO" id="GO:0005886">
    <property type="term" value="C:plasma membrane"/>
    <property type="evidence" value="ECO:0007669"/>
    <property type="project" value="UniProtKB-SubCell"/>
</dbReference>
<dbReference type="GO" id="GO:0003954">
    <property type="term" value="F:NADH dehydrogenase activity"/>
    <property type="evidence" value="ECO:0007669"/>
    <property type="project" value="TreeGrafter"/>
</dbReference>
<dbReference type="GO" id="GO:0016655">
    <property type="term" value="F:oxidoreductase activity, acting on NAD(P)H, quinone or similar compound as acceptor"/>
    <property type="evidence" value="ECO:0007669"/>
    <property type="project" value="UniProtKB-UniRule"/>
</dbReference>
<dbReference type="GO" id="GO:0048038">
    <property type="term" value="F:quinone binding"/>
    <property type="evidence" value="ECO:0007669"/>
    <property type="project" value="UniProtKB-KW"/>
</dbReference>
<dbReference type="GO" id="GO:0009060">
    <property type="term" value="P:aerobic respiration"/>
    <property type="evidence" value="ECO:0007669"/>
    <property type="project" value="TreeGrafter"/>
</dbReference>
<dbReference type="HAMAP" id="MF_01350">
    <property type="entry name" value="NDH1_NuoH"/>
    <property type="match status" value="1"/>
</dbReference>
<dbReference type="InterPro" id="IPR001694">
    <property type="entry name" value="NADH_UbQ_OxRdtase_su1/FPO"/>
</dbReference>
<dbReference type="InterPro" id="IPR018086">
    <property type="entry name" value="NADH_UbQ_OxRdtase_su1_CS"/>
</dbReference>
<dbReference type="NCBIfam" id="NF004741">
    <property type="entry name" value="PRK06076.1-2"/>
    <property type="match status" value="1"/>
</dbReference>
<dbReference type="PANTHER" id="PTHR11432">
    <property type="entry name" value="NADH DEHYDROGENASE SUBUNIT 1"/>
    <property type="match status" value="1"/>
</dbReference>
<dbReference type="PANTHER" id="PTHR11432:SF3">
    <property type="entry name" value="NADH-UBIQUINONE OXIDOREDUCTASE CHAIN 1"/>
    <property type="match status" value="1"/>
</dbReference>
<dbReference type="Pfam" id="PF00146">
    <property type="entry name" value="NADHdh"/>
    <property type="match status" value="1"/>
</dbReference>
<dbReference type="PROSITE" id="PS00667">
    <property type="entry name" value="COMPLEX1_ND1_1"/>
    <property type="match status" value="1"/>
</dbReference>
<reference key="1">
    <citation type="submission" date="2008-10" db="EMBL/GenBank/DDBJ databases">
        <title>The complete genome sequence of Helicobacter pylori strain P12.</title>
        <authorList>
            <person name="Fischer W."/>
            <person name="Windhager L."/>
            <person name="Karnholz A."/>
            <person name="Zeiller M."/>
            <person name="Zimmer R."/>
            <person name="Haas R."/>
        </authorList>
    </citation>
    <scope>NUCLEOTIDE SEQUENCE [LARGE SCALE GENOMIC DNA]</scope>
    <source>
        <strain>P12</strain>
    </source>
</reference>
<gene>
    <name evidence="1" type="primary">nuoH</name>
    <name type="ordered locus">HPP12_1233</name>
</gene>
<sequence length="329" mass="36329">MSAYIIETLIKILILVAVFSALGGFATYIERKVLAYFQRRLGPCYVGPFGLLQVAADGIKLFTKEDIIPQGANKFIFTLAPIIAMVSAFVSMAPIPFFPNFTLFGYEIKPLISDINIGFLFFLAVGAAGIYAPILAGLASNNKYSLIGSARATIQLLSFEVVSTLTILAPLMVVGSLSLVEINHYQSGGFLDWLVFKQPLAFVLFLIASYAELNRTPFDLLEHEAEIVAGYCTEYSGLKWGMFFLAEYAHLFAFSFVISIVFFGGFNAWGFIPGGIAILIKAGFFVFLSMWVRATYPHVRPDQLMDMCWKIMLPLALLNIVLTGIIILI</sequence>
<proteinExistence type="inferred from homology"/>
<protein>
    <recommendedName>
        <fullName evidence="1">NADH-quinone oxidoreductase subunit H</fullName>
        <ecNumber evidence="1">7.1.1.-</ecNumber>
    </recommendedName>
    <alternativeName>
        <fullName evidence="1">NADH dehydrogenase I subunit H</fullName>
    </alternativeName>
    <alternativeName>
        <fullName evidence="1">NDH-1 subunit H</fullName>
    </alternativeName>
</protein>
<feature type="chain" id="PRO_1000143601" description="NADH-quinone oxidoreductase subunit H">
    <location>
        <begin position="1"/>
        <end position="329"/>
    </location>
</feature>
<feature type="transmembrane region" description="Helical" evidence="1">
    <location>
        <begin position="9"/>
        <end position="29"/>
    </location>
</feature>
<feature type="transmembrane region" description="Helical" evidence="1">
    <location>
        <begin position="42"/>
        <end position="62"/>
    </location>
</feature>
<feature type="transmembrane region" description="Helical" evidence="1">
    <location>
        <begin position="75"/>
        <end position="95"/>
    </location>
</feature>
<feature type="transmembrane region" description="Helical" evidence="1">
    <location>
        <begin position="117"/>
        <end position="137"/>
    </location>
</feature>
<feature type="transmembrane region" description="Helical" evidence="1">
    <location>
        <begin position="154"/>
        <end position="174"/>
    </location>
</feature>
<feature type="transmembrane region" description="Helical" evidence="1">
    <location>
        <begin position="188"/>
        <end position="208"/>
    </location>
</feature>
<feature type="transmembrane region" description="Helical" evidence="1">
    <location>
        <begin position="238"/>
        <end position="258"/>
    </location>
</feature>
<feature type="transmembrane region" description="Helical" evidence="1">
    <location>
        <begin position="269"/>
        <end position="291"/>
    </location>
</feature>
<feature type="transmembrane region" description="Helical" evidence="1">
    <location>
        <begin position="309"/>
        <end position="329"/>
    </location>
</feature>
<organism>
    <name type="scientific">Helicobacter pylori (strain P12)</name>
    <dbReference type="NCBI Taxonomy" id="570508"/>
    <lineage>
        <taxon>Bacteria</taxon>
        <taxon>Pseudomonadati</taxon>
        <taxon>Campylobacterota</taxon>
        <taxon>Epsilonproteobacteria</taxon>
        <taxon>Campylobacterales</taxon>
        <taxon>Helicobacteraceae</taxon>
        <taxon>Helicobacter</taxon>
    </lineage>
</organism>